<comment type="subunit">
    <text evidence="1">Forms oligomers.</text>
</comment>
<comment type="subcellular location">
    <subcellularLocation>
        <location evidence="1">Cytoplasm</location>
        <location evidence="1">Nucleoid</location>
    </subcellularLocation>
</comment>
<comment type="similarity">
    <text evidence="1">Belongs to the MraZ family.</text>
</comment>
<reference key="1">
    <citation type="journal article" date="2008" name="PLoS ONE">
        <title>Genetic basis of virulence attenuation revealed by comparative genomic analysis of Mycobacterium tuberculosis strain H37Ra versus H37Rv.</title>
        <authorList>
            <person name="Zheng H."/>
            <person name="Lu L."/>
            <person name="Wang B."/>
            <person name="Pu S."/>
            <person name="Zhang X."/>
            <person name="Zhu G."/>
            <person name="Shi W."/>
            <person name="Zhang L."/>
            <person name="Wang H."/>
            <person name="Wang S."/>
            <person name="Zhao G."/>
            <person name="Zhang Y."/>
        </authorList>
    </citation>
    <scope>NUCLEOTIDE SEQUENCE [LARGE SCALE GENOMIC DNA]</scope>
    <source>
        <strain>ATCC 25177 / H37Ra</strain>
    </source>
</reference>
<organism>
    <name type="scientific">Mycobacterium tuberculosis (strain ATCC 25177 / H37Ra)</name>
    <dbReference type="NCBI Taxonomy" id="419947"/>
    <lineage>
        <taxon>Bacteria</taxon>
        <taxon>Bacillati</taxon>
        <taxon>Actinomycetota</taxon>
        <taxon>Actinomycetes</taxon>
        <taxon>Mycobacteriales</taxon>
        <taxon>Mycobacteriaceae</taxon>
        <taxon>Mycobacterium</taxon>
        <taxon>Mycobacterium tuberculosis complex</taxon>
    </lineage>
</organism>
<sequence length="143" mass="15912">MFLGTYTPKLDDKGRLTLPAKFRDALAGGLMVTKSQDHSLAVYPRAAFEQLARRASKAPRSNPEARAFLRNLAAGTDEQHPDSQGRITLSADHRRYASLSKDCVVIGAVDYLEIWDAQAWQNYQQIHEENFSAASDEALGDIF</sequence>
<dbReference type="EMBL" id="CP000611">
    <property type="protein sequence ID" value="ABQ73943.1"/>
    <property type="molecule type" value="Genomic_DNA"/>
</dbReference>
<dbReference type="RefSeq" id="WP_003411225.1">
    <property type="nucleotide sequence ID" value="NZ_CP016972.1"/>
</dbReference>
<dbReference type="SMR" id="A5U4J3"/>
<dbReference type="KEGG" id="mra:MRA_2181"/>
<dbReference type="eggNOG" id="COG2001">
    <property type="taxonomic scope" value="Bacteria"/>
</dbReference>
<dbReference type="HOGENOM" id="CLU_107907_0_5_11"/>
<dbReference type="Proteomes" id="UP000001988">
    <property type="component" value="Chromosome"/>
</dbReference>
<dbReference type="GO" id="GO:0005737">
    <property type="term" value="C:cytoplasm"/>
    <property type="evidence" value="ECO:0007669"/>
    <property type="project" value="UniProtKB-UniRule"/>
</dbReference>
<dbReference type="GO" id="GO:0009295">
    <property type="term" value="C:nucleoid"/>
    <property type="evidence" value="ECO:0007669"/>
    <property type="project" value="UniProtKB-SubCell"/>
</dbReference>
<dbReference type="GO" id="GO:0003700">
    <property type="term" value="F:DNA-binding transcription factor activity"/>
    <property type="evidence" value="ECO:0007669"/>
    <property type="project" value="UniProtKB-UniRule"/>
</dbReference>
<dbReference type="GO" id="GO:0000976">
    <property type="term" value="F:transcription cis-regulatory region binding"/>
    <property type="evidence" value="ECO:0007669"/>
    <property type="project" value="TreeGrafter"/>
</dbReference>
<dbReference type="GO" id="GO:2000143">
    <property type="term" value="P:negative regulation of DNA-templated transcription initiation"/>
    <property type="evidence" value="ECO:0007669"/>
    <property type="project" value="TreeGrafter"/>
</dbReference>
<dbReference type="CDD" id="cd16321">
    <property type="entry name" value="MraZ_C"/>
    <property type="match status" value="1"/>
</dbReference>
<dbReference type="CDD" id="cd16320">
    <property type="entry name" value="MraZ_N"/>
    <property type="match status" value="1"/>
</dbReference>
<dbReference type="FunFam" id="3.40.1550.20:FF:000004">
    <property type="entry name" value="Transcriptional regulator MraZ"/>
    <property type="match status" value="1"/>
</dbReference>
<dbReference type="Gene3D" id="3.40.1550.20">
    <property type="entry name" value="Transcriptional regulator MraZ domain"/>
    <property type="match status" value="1"/>
</dbReference>
<dbReference type="HAMAP" id="MF_01008">
    <property type="entry name" value="MraZ"/>
    <property type="match status" value="1"/>
</dbReference>
<dbReference type="InterPro" id="IPR003444">
    <property type="entry name" value="MraZ"/>
</dbReference>
<dbReference type="InterPro" id="IPR035644">
    <property type="entry name" value="MraZ_C"/>
</dbReference>
<dbReference type="InterPro" id="IPR020603">
    <property type="entry name" value="MraZ_dom"/>
</dbReference>
<dbReference type="InterPro" id="IPR035642">
    <property type="entry name" value="MraZ_N"/>
</dbReference>
<dbReference type="InterPro" id="IPR038619">
    <property type="entry name" value="MraZ_sf"/>
</dbReference>
<dbReference type="InterPro" id="IPR007159">
    <property type="entry name" value="SpoVT-AbrB_dom"/>
</dbReference>
<dbReference type="InterPro" id="IPR037914">
    <property type="entry name" value="SpoVT-AbrB_sf"/>
</dbReference>
<dbReference type="NCBIfam" id="TIGR00242">
    <property type="entry name" value="division/cell wall cluster transcriptional repressor MraZ"/>
    <property type="match status" value="1"/>
</dbReference>
<dbReference type="PANTHER" id="PTHR34701">
    <property type="entry name" value="TRANSCRIPTIONAL REGULATOR MRAZ"/>
    <property type="match status" value="1"/>
</dbReference>
<dbReference type="PANTHER" id="PTHR34701:SF1">
    <property type="entry name" value="TRANSCRIPTIONAL REGULATOR MRAZ"/>
    <property type="match status" value="1"/>
</dbReference>
<dbReference type="Pfam" id="PF02381">
    <property type="entry name" value="MraZ"/>
    <property type="match status" value="2"/>
</dbReference>
<dbReference type="SUPFAM" id="SSF89447">
    <property type="entry name" value="AbrB/MazE/MraZ-like"/>
    <property type="match status" value="1"/>
</dbReference>
<dbReference type="PROSITE" id="PS51740">
    <property type="entry name" value="SPOVT_ABRB"/>
    <property type="match status" value="2"/>
</dbReference>
<accession>A5U4J3</accession>
<proteinExistence type="inferred from homology"/>
<feature type="chain" id="PRO_1000062902" description="Transcriptional regulator MraZ">
    <location>
        <begin position="1"/>
        <end position="143"/>
    </location>
</feature>
<feature type="domain" description="SpoVT-AbrB 1" evidence="2">
    <location>
        <begin position="5"/>
        <end position="47"/>
    </location>
</feature>
<feature type="domain" description="SpoVT-AbrB 2" evidence="2">
    <location>
        <begin position="76"/>
        <end position="119"/>
    </location>
</feature>
<gene>
    <name evidence="1" type="primary">mraZ</name>
    <name type="ordered locus">MRA_2181</name>
</gene>
<evidence type="ECO:0000255" key="1">
    <source>
        <dbReference type="HAMAP-Rule" id="MF_01008"/>
    </source>
</evidence>
<evidence type="ECO:0000255" key="2">
    <source>
        <dbReference type="PROSITE-ProRule" id="PRU01076"/>
    </source>
</evidence>
<keyword id="KW-0963">Cytoplasm</keyword>
<keyword id="KW-0238">DNA-binding</keyword>
<keyword id="KW-1185">Reference proteome</keyword>
<keyword id="KW-0677">Repeat</keyword>
<keyword id="KW-0804">Transcription</keyword>
<keyword id="KW-0805">Transcription regulation</keyword>
<protein>
    <recommendedName>
        <fullName>Transcriptional regulator MraZ</fullName>
    </recommendedName>
</protein>
<name>MRAZ_MYCTA</name>